<proteinExistence type="evidence at protein level"/>
<gene>
    <name type="primary">sspC</name>
    <name type="ordered locus">MW0930</name>
</gene>
<sequence length="109" mass="12882">MYQLQFINLVYDTTKLTHLEQTNINLFIGNWSNHQLQKSICIRHGDDTSHNQYHILFIDTAHQRIKFSSIDNEEIIYILDYDDTQHILMQTSSKQGIGTSRPIVYERLV</sequence>
<name>SSPC_STAAW</name>
<dbReference type="EMBL" id="BA000033">
    <property type="protein sequence ID" value="BAB94795.1"/>
    <property type="molecule type" value="Genomic_DNA"/>
</dbReference>
<dbReference type="RefSeq" id="WP_000284457.1">
    <property type="nucleotide sequence ID" value="NC_003923.1"/>
</dbReference>
<dbReference type="PDB" id="1NYC">
    <property type="method" value="X-ray"/>
    <property type="resolution" value="1.40 A"/>
    <property type="chains" value="A/B=1-109"/>
</dbReference>
<dbReference type="PDB" id="1QWX">
    <property type="method" value="X-ray"/>
    <property type="resolution" value="1.50 A"/>
    <property type="chains" value="A/B=1-109"/>
</dbReference>
<dbReference type="PDBsum" id="1NYC"/>
<dbReference type="PDBsum" id="1QWX"/>
<dbReference type="SMR" id="Q7A189"/>
<dbReference type="MEROPS" id="I57.001"/>
<dbReference type="KEGG" id="sam:MW0930"/>
<dbReference type="HOGENOM" id="CLU_174854_0_0_9"/>
<dbReference type="EvolutionaryTrace" id="Q7A189"/>
<dbReference type="GO" id="GO:0005737">
    <property type="term" value="C:cytoplasm"/>
    <property type="evidence" value="ECO:0007669"/>
    <property type="project" value="UniProtKB-SubCell"/>
</dbReference>
<dbReference type="GO" id="GO:0004869">
    <property type="term" value="F:cysteine-type endopeptidase inhibitor activity"/>
    <property type="evidence" value="ECO:0007669"/>
    <property type="project" value="UniProtKB-KW"/>
</dbReference>
<dbReference type="Gene3D" id="2.40.310.10">
    <property type="entry name" value="beta-Barrel protease inhibitors"/>
    <property type="match status" value="1"/>
</dbReference>
<dbReference type="InterPro" id="IPR016085">
    <property type="entry name" value="Protease_inh_b-brl_dom"/>
</dbReference>
<dbReference type="InterPro" id="IPR037296">
    <property type="entry name" value="Staphostatin_A/B"/>
</dbReference>
<dbReference type="InterPro" id="IPR015113">
    <property type="entry name" value="Staphostatin_B"/>
</dbReference>
<dbReference type="Pfam" id="PF09023">
    <property type="entry name" value="Staphostatin_B"/>
    <property type="match status" value="1"/>
</dbReference>
<dbReference type="SUPFAM" id="SSF50882">
    <property type="entry name" value="beta-Barrel protease inhibitors"/>
    <property type="match status" value="1"/>
</dbReference>
<feature type="chain" id="PRO_0000220559" description="Staphostatin B">
    <location>
        <begin position="1"/>
        <end position="109"/>
    </location>
</feature>
<feature type="region of interest" description="Binds to staphopain B" evidence="1">
    <location>
        <begin position="97"/>
        <end position="101"/>
    </location>
</feature>
<feature type="strand" evidence="3">
    <location>
        <begin position="2"/>
        <end position="10"/>
    </location>
</feature>
<feature type="helix" evidence="3">
    <location>
        <begin position="13"/>
        <end position="15"/>
    </location>
</feature>
<feature type="helix" evidence="3">
    <location>
        <begin position="18"/>
        <end position="25"/>
    </location>
</feature>
<feature type="strand" evidence="3">
    <location>
        <begin position="29"/>
        <end position="33"/>
    </location>
</feature>
<feature type="turn" evidence="3">
    <location>
        <begin position="34"/>
        <end position="37"/>
    </location>
</feature>
<feature type="strand" evidence="3">
    <location>
        <begin position="38"/>
        <end position="45"/>
    </location>
</feature>
<feature type="strand" evidence="3">
    <location>
        <begin position="50"/>
        <end position="59"/>
    </location>
</feature>
<feature type="turn" evidence="3">
    <location>
        <begin position="60"/>
        <end position="63"/>
    </location>
</feature>
<feature type="strand" evidence="3">
    <location>
        <begin position="64"/>
        <end position="69"/>
    </location>
</feature>
<feature type="strand" evidence="3">
    <location>
        <begin position="72"/>
        <end position="83"/>
    </location>
</feature>
<feature type="strand" evidence="3">
    <location>
        <begin position="86"/>
        <end position="97"/>
    </location>
</feature>
<feature type="strand" evidence="3">
    <location>
        <begin position="103"/>
        <end position="107"/>
    </location>
</feature>
<accession>Q7A189</accession>
<comment type="function">
    <text evidence="1">Specifically inhibits the cysteine protease staphopain B (SspB) by blocking the active site of the enzyme. Probably required to protect cytoplasmic proteins from being degraded by prematurely activated/folded prostaphopain B. Also involved in growth capacity, viability and bacterial morphology (By similarity).</text>
</comment>
<comment type="subunit">
    <text evidence="1">Forms a stable non-covalent complex with prematurely activated/folded SspB.</text>
</comment>
<comment type="subcellular location">
    <subcellularLocation>
        <location evidence="1">Cytoplasm</location>
    </subcellularLocation>
</comment>
<comment type="domain">
    <text>N-terminal residues are not required for inhibitory activity.</text>
</comment>
<comment type="miscellaneous">
    <text evidence="1">Inactivated by staphylococcal serine protease (SspA).</text>
</comment>
<comment type="similarity">
    <text evidence="2">Belongs to the protease inhibitor I57 (SspC) family.</text>
</comment>
<reference key="1">
    <citation type="journal article" date="2002" name="Lancet">
        <title>Genome and virulence determinants of high virulence community-acquired MRSA.</title>
        <authorList>
            <person name="Baba T."/>
            <person name="Takeuchi F."/>
            <person name="Kuroda M."/>
            <person name="Yuzawa H."/>
            <person name="Aoki K."/>
            <person name="Oguchi A."/>
            <person name="Nagai Y."/>
            <person name="Iwama N."/>
            <person name="Asano K."/>
            <person name="Naimi T."/>
            <person name="Kuroda H."/>
            <person name="Cui L."/>
            <person name="Yamamoto K."/>
            <person name="Hiramatsu K."/>
        </authorList>
    </citation>
    <scope>NUCLEOTIDE SEQUENCE [LARGE SCALE GENOMIC DNA]</scope>
    <source>
        <strain>MW2</strain>
    </source>
</reference>
<reference key="2">
    <citation type="journal article" date="2003" name="Protein Sci.">
        <title>Staphostatins resemble lipocalins, not cystatins in fold.</title>
        <authorList>
            <person name="Rzychon M."/>
            <person name="Filipek R."/>
            <person name="Sabat A."/>
            <person name="Kosowska K."/>
            <person name="Dubin A."/>
            <person name="Potempa J."/>
            <person name="Bochtler M."/>
        </authorList>
    </citation>
    <scope>X-RAY CRYSTALLOGRAPHY (1.4 ANGSTROMS)</scope>
</reference>
<reference key="3">
    <citation type="submission" date="2004-02" db="PDB data bank">
        <title>Crystal structure of a staphylococcal inhibitor/chaperone.</title>
        <authorList>
            <person name="Brown C.K."/>
            <person name="Gu Z.-Y."/>
            <person name="Nickerson N."/>
            <person name="McGavin M.J."/>
            <person name="Ohlendorf D.H."/>
            <person name="Earhart C.A."/>
        </authorList>
    </citation>
    <scope>X-RAY CRYSTALLOGRAPHY (1.5 ANGSTROMS)</scope>
</reference>
<organism>
    <name type="scientific">Staphylococcus aureus (strain MW2)</name>
    <dbReference type="NCBI Taxonomy" id="196620"/>
    <lineage>
        <taxon>Bacteria</taxon>
        <taxon>Bacillati</taxon>
        <taxon>Bacillota</taxon>
        <taxon>Bacilli</taxon>
        <taxon>Bacillales</taxon>
        <taxon>Staphylococcaceae</taxon>
        <taxon>Staphylococcus</taxon>
    </lineage>
</organism>
<evidence type="ECO:0000250" key="1"/>
<evidence type="ECO:0000305" key="2"/>
<evidence type="ECO:0007829" key="3">
    <source>
        <dbReference type="PDB" id="1NYC"/>
    </source>
</evidence>
<protein>
    <recommendedName>
        <fullName>Staphostatin B</fullName>
    </recommendedName>
    <alternativeName>
        <fullName>Staphylococcal cysteine protease B inhibitor</fullName>
    </alternativeName>
</protein>
<keyword id="KW-0002">3D-structure</keyword>
<keyword id="KW-0963">Cytoplasm</keyword>
<keyword id="KW-0646">Protease inhibitor</keyword>
<keyword id="KW-0789">Thiol protease inhibitor</keyword>
<keyword id="KW-0843">Virulence</keyword>